<accession>Q6D0E0</accession>
<dbReference type="EC" id="2.1.1.182" evidence="1"/>
<dbReference type="EMBL" id="BX950851">
    <property type="protein sequence ID" value="CAG76757.1"/>
    <property type="molecule type" value="Genomic_DNA"/>
</dbReference>
<dbReference type="RefSeq" id="WP_011095357.1">
    <property type="nucleotide sequence ID" value="NC_004547.2"/>
</dbReference>
<dbReference type="SMR" id="Q6D0E0"/>
<dbReference type="STRING" id="218491.ECA3859"/>
<dbReference type="KEGG" id="eca:ECA3859"/>
<dbReference type="PATRIC" id="fig|218491.5.peg.3914"/>
<dbReference type="eggNOG" id="COG0030">
    <property type="taxonomic scope" value="Bacteria"/>
</dbReference>
<dbReference type="HOGENOM" id="CLU_041220_0_1_6"/>
<dbReference type="OrthoDB" id="9814755at2"/>
<dbReference type="Proteomes" id="UP000007966">
    <property type="component" value="Chromosome"/>
</dbReference>
<dbReference type="GO" id="GO:0005829">
    <property type="term" value="C:cytosol"/>
    <property type="evidence" value="ECO:0007669"/>
    <property type="project" value="TreeGrafter"/>
</dbReference>
<dbReference type="GO" id="GO:0052908">
    <property type="term" value="F:16S rRNA (adenine(1518)-N(6)/adenine(1519)-N(6))-dimethyltransferase activity"/>
    <property type="evidence" value="ECO:0007669"/>
    <property type="project" value="UniProtKB-EC"/>
</dbReference>
<dbReference type="GO" id="GO:0003723">
    <property type="term" value="F:RNA binding"/>
    <property type="evidence" value="ECO:0007669"/>
    <property type="project" value="UniProtKB-KW"/>
</dbReference>
<dbReference type="CDD" id="cd02440">
    <property type="entry name" value="AdoMet_MTases"/>
    <property type="match status" value="1"/>
</dbReference>
<dbReference type="FunFam" id="1.10.8.100:FF:000001">
    <property type="entry name" value="Ribosomal RNA small subunit methyltransferase A"/>
    <property type="match status" value="1"/>
</dbReference>
<dbReference type="FunFam" id="3.40.50.150:FF:000006">
    <property type="entry name" value="Ribosomal RNA small subunit methyltransferase A"/>
    <property type="match status" value="1"/>
</dbReference>
<dbReference type="Gene3D" id="1.10.8.100">
    <property type="entry name" value="Ribosomal RNA adenine dimethylase-like, domain 2"/>
    <property type="match status" value="1"/>
</dbReference>
<dbReference type="Gene3D" id="3.40.50.150">
    <property type="entry name" value="Vaccinia Virus protein VP39"/>
    <property type="match status" value="1"/>
</dbReference>
<dbReference type="HAMAP" id="MF_00607">
    <property type="entry name" value="16SrRNA_methyltr_A"/>
    <property type="match status" value="1"/>
</dbReference>
<dbReference type="InterPro" id="IPR001737">
    <property type="entry name" value="KsgA/Erm"/>
</dbReference>
<dbReference type="InterPro" id="IPR023165">
    <property type="entry name" value="rRNA_Ade_diMease-like_C"/>
</dbReference>
<dbReference type="InterPro" id="IPR020596">
    <property type="entry name" value="rRNA_Ade_Mease_Trfase_CS"/>
</dbReference>
<dbReference type="InterPro" id="IPR020598">
    <property type="entry name" value="rRNA_Ade_methylase_Trfase_N"/>
</dbReference>
<dbReference type="InterPro" id="IPR011530">
    <property type="entry name" value="rRNA_adenine_dimethylase"/>
</dbReference>
<dbReference type="InterPro" id="IPR029063">
    <property type="entry name" value="SAM-dependent_MTases_sf"/>
</dbReference>
<dbReference type="NCBIfam" id="TIGR00755">
    <property type="entry name" value="ksgA"/>
    <property type="match status" value="1"/>
</dbReference>
<dbReference type="PANTHER" id="PTHR11727">
    <property type="entry name" value="DIMETHYLADENOSINE TRANSFERASE"/>
    <property type="match status" value="1"/>
</dbReference>
<dbReference type="PANTHER" id="PTHR11727:SF7">
    <property type="entry name" value="DIMETHYLADENOSINE TRANSFERASE-RELATED"/>
    <property type="match status" value="1"/>
</dbReference>
<dbReference type="Pfam" id="PF00398">
    <property type="entry name" value="RrnaAD"/>
    <property type="match status" value="1"/>
</dbReference>
<dbReference type="SMART" id="SM00650">
    <property type="entry name" value="rADc"/>
    <property type="match status" value="1"/>
</dbReference>
<dbReference type="SUPFAM" id="SSF53335">
    <property type="entry name" value="S-adenosyl-L-methionine-dependent methyltransferases"/>
    <property type="match status" value="1"/>
</dbReference>
<dbReference type="PROSITE" id="PS01131">
    <property type="entry name" value="RRNA_A_DIMETH"/>
    <property type="match status" value="1"/>
</dbReference>
<dbReference type="PROSITE" id="PS51689">
    <property type="entry name" value="SAM_RNA_A_N6_MT"/>
    <property type="match status" value="1"/>
</dbReference>
<protein>
    <recommendedName>
        <fullName evidence="1">Ribosomal RNA small subunit methyltransferase A</fullName>
        <ecNumber evidence="1">2.1.1.182</ecNumber>
    </recommendedName>
    <alternativeName>
        <fullName evidence="1">16S rRNA (adenine(1518)-N(6)/adenine(1519)-N(6))-dimethyltransferase</fullName>
    </alternativeName>
    <alternativeName>
        <fullName evidence="1">16S rRNA dimethyladenosine transferase</fullName>
    </alternativeName>
    <alternativeName>
        <fullName evidence="1">16S rRNA dimethylase</fullName>
    </alternativeName>
    <alternativeName>
        <fullName evidence="1">S-adenosylmethionine-6-N', N'-adenosyl(rRNA) dimethyltransferase</fullName>
    </alternativeName>
</protein>
<organism>
    <name type="scientific">Pectobacterium atrosepticum (strain SCRI 1043 / ATCC BAA-672)</name>
    <name type="common">Erwinia carotovora subsp. atroseptica</name>
    <dbReference type="NCBI Taxonomy" id="218491"/>
    <lineage>
        <taxon>Bacteria</taxon>
        <taxon>Pseudomonadati</taxon>
        <taxon>Pseudomonadota</taxon>
        <taxon>Gammaproteobacteria</taxon>
        <taxon>Enterobacterales</taxon>
        <taxon>Pectobacteriaceae</taxon>
        <taxon>Pectobacterium</taxon>
    </lineage>
</organism>
<evidence type="ECO:0000255" key="1">
    <source>
        <dbReference type="HAMAP-Rule" id="MF_00607"/>
    </source>
</evidence>
<keyword id="KW-0963">Cytoplasm</keyword>
<keyword id="KW-0489">Methyltransferase</keyword>
<keyword id="KW-1185">Reference proteome</keyword>
<keyword id="KW-0694">RNA-binding</keyword>
<keyword id="KW-0698">rRNA processing</keyword>
<keyword id="KW-0949">S-adenosyl-L-methionine</keyword>
<keyword id="KW-0808">Transferase</keyword>
<proteinExistence type="inferred from homology"/>
<gene>
    <name evidence="1" type="primary">rsmA</name>
    <name evidence="1" type="synonym">ksgA</name>
    <name type="ordered locus">ECA3859</name>
</gene>
<sequence>MNNRVHQGHFARKRFGQNFLNDHFVIDSIVSAIHPQPGQAVVEIGPGLGALTAPIGERMDRFTVIELDRDLAARLEKHPTLKDKLTIIQQDAMTIDFAALAEQAGQPLRVFGNLPYNISTPLMFHLFTYTQSIRDMHFMLQKEVVNRLVAGPNSKTFGRLSVMAQYYCQIIPVLEVPPEAFKPAPKVDSAVVRLVPHAELPYPVSDIRMLSRITTEAFNQRRKTLRNSLGNLFTPETLTELGINITSRAENVTVEQYCRLANWLSEHPAKQE</sequence>
<reference key="1">
    <citation type="journal article" date="2004" name="Proc. Natl. Acad. Sci. U.S.A.">
        <title>Genome sequence of the enterobacterial phytopathogen Erwinia carotovora subsp. atroseptica and characterization of virulence factors.</title>
        <authorList>
            <person name="Bell K.S."/>
            <person name="Sebaihia M."/>
            <person name="Pritchard L."/>
            <person name="Holden M.T.G."/>
            <person name="Hyman L.J."/>
            <person name="Holeva M.C."/>
            <person name="Thomson N.R."/>
            <person name="Bentley S.D."/>
            <person name="Churcher L.J.C."/>
            <person name="Mungall K."/>
            <person name="Atkin R."/>
            <person name="Bason N."/>
            <person name="Brooks K."/>
            <person name="Chillingworth T."/>
            <person name="Clark K."/>
            <person name="Doggett J."/>
            <person name="Fraser A."/>
            <person name="Hance Z."/>
            <person name="Hauser H."/>
            <person name="Jagels K."/>
            <person name="Moule S."/>
            <person name="Norbertczak H."/>
            <person name="Ormond D."/>
            <person name="Price C."/>
            <person name="Quail M.A."/>
            <person name="Sanders M."/>
            <person name="Walker D."/>
            <person name="Whitehead S."/>
            <person name="Salmond G.P.C."/>
            <person name="Birch P.R.J."/>
            <person name="Parkhill J."/>
            <person name="Toth I.K."/>
        </authorList>
    </citation>
    <scope>NUCLEOTIDE SEQUENCE [LARGE SCALE GENOMIC DNA]</scope>
    <source>
        <strain>SCRI 1043 / ATCC BAA-672</strain>
    </source>
</reference>
<name>RSMA_PECAS</name>
<comment type="function">
    <text evidence="1">Specifically dimethylates two adjacent adenosines (A1518 and A1519) in the loop of a conserved hairpin near the 3'-end of 16S rRNA in the 30S particle. May play a critical role in biogenesis of 30S subunits.</text>
</comment>
<comment type="catalytic activity">
    <reaction evidence="1">
        <text>adenosine(1518)/adenosine(1519) in 16S rRNA + 4 S-adenosyl-L-methionine = N(6)-dimethyladenosine(1518)/N(6)-dimethyladenosine(1519) in 16S rRNA + 4 S-adenosyl-L-homocysteine + 4 H(+)</text>
        <dbReference type="Rhea" id="RHEA:19609"/>
        <dbReference type="Rhea" id="RHEA-COMP:10232"/>
        <dbReference type="Rhea" id="RHEA-COMP:10233"/>
        <dbReference type="ChEBI" id="CHEBI:15378"/>
        <dbReference type="ChEBI" id="CHEBI:57856"/>
        <dbReference type="ChEBI" id="CHEBI:59789"/>
        <dbReference type="ChEBI" id="CHEBI:74411"/>
        <dbReference type="ChEBI" id="CHEBI:74493"/>
        <dbReference type="EC" id="2.1.1.182"/>
    </reaction>
</comment>
<comment type="subcellular location">
    <subcellularLocation>
        <location evidence="1">Cytoplasm</location>
    </subcellularLocation>
</comment>
<comment type="similarity">
    <text evidence="1">Belongs to the class I-like SAM-binding methyltransferase superfamily. rRNA adenine N(6)-methyltransferase family. RsmA subfamily.</text>
</comment>
<feature type="chain" id="PRO_0000101530" description="Ribosomal RNA small subunit methyltransferase A">
    <location>
        <begin position="1"/>
        <end position="272"/>
    </location>
</feature>
<feature type="binding site" evidence="1">
    <location>
        <position position="18"/>
    </location>
    <ligand>
        <name>S-adenosyl-L-methionine</name>
        <dbReference type="ChEBI" id="CHEBI:59789"/>
    </ligand>
</feature>
<feature type="binding site" evidence="1">
    <location>
        <position position="20"/>
    </location>
    <ligand>
        <name>S-adenosyl-L-methionine</name>
        <dbReference type="ChEBI" id="CHEBI:59789"/>
    </ligand>
</feature>
<feature type="binding site" evidence="1">
    <location>
        <position position="45"/>
    </location>
    <ligand>
        <name>S-adenosyl-L-methionine</name>
        <dbReference type="ChEBI" id="CHEBI:59789"/>
    </ligand>
</feature>
<feature type="binding site" evidence="1">
    <location>
        <position position="66"/>
    </location>
    <ligand>
        <name>S-adenosyl-L-methionine</name>
        <dbReference type="ChEBI" id="CHEBI:59789"/>
    </ligand>
</feature>
<feature type="binding site" evidence="1">
    <location>
        <position position="91"/>
    </location>
    <ligand>
        <name>S-adenosyl-L-methionine</name>
        <dbReference type="ChEBI" id="CHEBI:59789"/>
    </ligand>
</feature>
<feature type="binding site" evidence="1">
    <location>
        <position position="113"/>
    </location>
    <ligand>
        <name>S-adenosyl-L-methionine</name>
        <dbReference type="ChEBI" id="CHEBI:59789"/>
    </ligand>
</feature>